<comment type="function">
    <text evidence="1">DNA-dependent RNA polymerase catalyzes the transcription of DNA into RNA using the four ribonucleoside triphosphates as substrates.</text>
</comment>
<comment type="catalytic activity">
    <reaction evidence="1">
        <text>RNA(n) + a ribonucleoside 5'-triphosphate = RNA(n+1) + diphosphate</text>
        <dbReference type="Rhea" id="RHEA:21248"/>
        <dbReference type="Rhea" id="RHEA-COMP:14527"/>
        <dbReference type="Rhea" id="RHEA-COMP:17342"/>
        <dbReference type="ChEBI" id="CHEBI:33019"/>
        <dbReference type="ChEBI" id="CHEBI:61557"/>
        <dbReference type="ChEBI" id="CHEBI:140395"/>
        <dbReference type="EC" id="2.7.7.6"/>
    </reaction>
</comment>
<comment type="subunit">
    <text evidence="1">Homodimer. The RNAP catalytic core consists of 2 alpha, 1 beta, 1 beta' and 1 omega subunit. When a sigma factor is associated with the core the holoenzyme is formed, which can initiate transcription.</text>
</comment>
<comment type="domain">
    <text evidence="1">The N-terminal domain is essential for RNAP assembly and basal transcription, whereas the C-terminal domain is involved in interaction with transcriptional regulators and with upstream promoter elements.</text>
</comment>
<comment type="similarity">
    <text evidence="1">Belongs to the RNA polymerase alpha chain family.</text>
</comment>
<accession>P0A4E6</accession>
<accession>P37368</accession>
<organism>
    <name type="scientific">Bordetella bronchiseptica (strain ATCC BAA-588 / NCTC 13252 / RB50)</name>
    <name type="common">Alcaligenes bronchisepticus</name>
    <dbReference type="NCBI Taxonomy" id="257310"/>
    <lineage>
        <taxon>Bacteria</taxon>
        <taxon>Pseudomonadati</taxon>
        <taxon>Pseudomonadota</taxon>
        <taxon>Betaproteobacteria</taxon>
        <taxon>Burkholderiales</taxon>
        <taxon>Alcaligenaceae</taxon>
        <taxon>Bordetella</taxon>
    </lineage>
</organism>
<protein>
    <recommendedName>
        <fullName evidence="1">DNA-directed RNA polymerase subunit alpha</fullName>
        <shortName evidence="1">RNAP subunit alpha</shortName>
        <ecNumber evidence="1">2.7.7.6</ecNumber>
    </recommendedName>
    <alternativeName>
        <fullName evidence="1">RNA polymerase subunit alpha</fullName>
    </alternativeName>
    <alternativeName>
        <fullName evidence="1">Transcriptase subunit alpha</fullName>
    </alternativeName>
</protein>
<gene>
    <name evidence="1" type="primary">rpoA</name>
    <name type="ordered locus">BB0057</name>
</gene>
<name>RPOA_BORBR</name>
<reference key="1">
    <citation type="journal article" date="2003" name="Nat. Genet.">
        <title>Comparative analysis of the genome sequences of Bordetella pertussis, Bordetella parapertussis and Bordetella bronchiseptica.</title>
        <authorList>
            <person name="Parkhill J."/>
            <person name="Sebaihia M."/>
            <person name="Preston A."/>
            <person name="Murphy L.D."/>
            <person name="Thomson N.R."/>
            <person name="Harris D.E."/>
            <person name="Holden M.T.G."/>
            <person name="Churcher C.M."/>
            <person name="Bentley S.D."/>
            <person name="Mungall K.L."/>
            <person name="Cerdeno-Tarraga A.-M."/>
            <person name="Temple L."/>
            <person name="James K.D."/>
            <person name="Harris B."/>
            <person name="Quail M.A."/>
            <person name="Achtman M."/>
            <person name="Atkin R."/>
            <person name="Baker S."/>
            <person name="Basham D."/>
            <person name="Bason N."/>
            <person name="Cherevach I."/>
            <person name="Chillingworth T."/>
            <person name="Collins M."/>
            <person name="Cronin A."/>
            <person name="Davis P."/>
            <person name="Doggett J."/>
            <person name="Feltwell T."/>
            <person name="Goble A."/>
            <person name="Hamlin N."/>
            <person name="Hauser H."/>
            <person name="Holroyd S."/>
            <person name="Jagels K."/>
            <person name="Leather S."/>
            <person name="Moule S."/>
            <person name="Norberczak H."/>
            <person name="O'Neil S."/>
            <person name="Ormond D."/>
            <person name="Price C."/>
            <person name="Rabbinowitsch E."/>
            <person name="Rutter S."/>
            <person name="Sanders M."/>
            <person name="Saunders D."/>
            <person name="Seeger K."/>
            <person name="Sharp S."/>
            <person name="Simmonds M."/>
            <person name="Skelton J."/>
            <person name="Squares R."/>
            <person name="Squares S."/>
            <person name="Stevens K."/>
            <person name="Unwin L."/>
            <person name="Whitehead S."/>
            <person name="Barrell B.G."/>
            <person name="Maskell D.J."/>
        </authorList>
    </citation>
    <scope>NUCLEOTIDE SEQUENCE [LARGE SCALE GENOMIC DNA]</scope>
    <source>
        <strain>ATCC BAA-588 / NCTC 13252 / RB50</strain>
    </source>
</reference>
<feature type="chain" id="PRO_0000175273" description="DNA-directed RNA polymerase subunit alpha">
    <location>
        <begin position="1"/>
        <end position="328"/>
    </location>
</feature>
<feature type="region of interest" description="Alpha N-terminal domain (alpha-NTD)" evidence="1">
    <location>
        <begin position="1"/>
        <end position="232"/>
    </location>
</feature>
<feature type="region of interest" description="Alpha C-terminal domain (alpha-CTD)" evidence="1">
    <location>
        <begin position="248"/>
        <end position="328"/>
    </location>
</feature>
<keyword id="KW-0240">DNA-directed RNA polymerase</keyword>
<keyword id="KW-0548">Nucleotidyltransferase</keyword>
<keyword id="KW-0804">Transcription</keyword>
<keyword id="KW-0808">Transferase</keyword>
<dbReference type="EC" id="2.7.7.6" evidence="1"/>
<dbReference type="EMBL" id="BX640437">
    <property type="protein sequence ID" value="CAE30559.1"/>
    <property type="molecule type" value="Genomic_DNA"/>
</dbReference>
<dbReference type="RefSeq" id="WP_003806932.1">
    <property type="nucleotide sequence ID" value="NC_002927.3"/>
</dbReference>
<dbReference type="SMR" id="P0A4E6"/>
<dbReference type="KEGG" id="bbr:BB0057"/>
<dbReference type="eggNOG" id="COG0202">
    <property type="taxonomic scope" value="Bacteria"/>
</dbReference>
<dbReference type="HOGENOM" id="CLU_053084_0_1_4"/>
<dbReference type="Proteomes" id="UP000001027">
    <property type="component" value="Chromosome"/>
</dbReference>
<dbReference type="GO" id="GO:0005737">
    <property type="term" value="C:cytoplasm"/>
    <property type="evidence" value="ECO:0007669"/>
    <property type="project" value="UniProtKB-ARBA"/>
</dbReference>
<dbReference type="GO" id="GO:0000428">
    <property type="term" value="C:DNA-directed RNA polymerase complex"/>
    <property type="evidence" value="ECO:0007669"/>
    <property type="project" value="UniProtKB-KW"/>
</dbReference>
<dbReference type="GO" id="GO:0003677">
    <property type="term" value="F:DNA binding"/>
    <property type="evidence" value="ECO:0007669"/>
    <property type="project" value="UniProtKB-UniRule"/>
</dbReference>
<dbReference type="GO" id="GO:0003899">
    <property type="term" value="F:DNA-directed RNA polymerase activity"/>
    <property type="evidence" value="ECO:0007669"/>
    <property type="project" value="UniProtKB-UniRule"/>
</dbReference>
<dbReference type="GO" id="GO:0046983">
    <property type="term" value="F:protein dimerization activity"/>
    <property type="evidence" value="ECO:0007669"/>
    <property type="project" value="InterPro"/>
</dbReference>
<dbReference type="GO" id="GO:0006351">
    <property type="term" value="P:DNA-templated transcription"/>
    <property type="evidence" value="ECO:0007669"/>
    <property type="project" value="UniProtKB-UniRule"/>
</dbReference>
<dbReference type="CDD" id="cd06928">
    <property type="entry name" value="RNAP_alpha_NTD"/>
    <property type="match status" value="1"/>
</dbReference>
<dbReference type="FunFam" id="1.10.150.20:FF:000001">
    <property type="entry name" value="DNA-directed RNA polymerase subunit alpha"/>
    <property type="match status" value="1"/>
</dbReference>
<dbReference type="FunFam" id="2.170.120.12:FF:000001">
    <property type="entry name" value="DNA-directed RNA polymerase subunit alpha"/>
    <property type="match status" value="1"/>
</dbReference>
<dbReference type="Gene3D" id="1.10.150.20">
    <property type="entry name" value="5' to 3' exonuclease, C-terminal subdomain"/>
    <property type="match status" value="1"/>
</dbReference>
<dbReference type="Gene3D" id="2.170.120.12">
    <property type="entry name" value="DNA-directed RNA polymerase, insert domain"/>
    <property type="match status" value="1"/>
</dbReference>
<dbReference type="Gene3D" id="3.30.1360.10">
    <property type="entry name" value="RNA polymerase, RBP11-like subunit"/>
    <property type="match status" value="1"/>
</dbReference>
<dbReference type="HAMAP" id="MF_00059">
    <property type="entry name" value="RNApol_bact_RpoA"/>
    <property type="match status" value="1"/>
</dbReference>
<dbReference type="InterPro" id="IPR011262">
    <property type="entry name" value="DNA-dir_RNA_pol_insert"/>
</dbReference>
<dbReference type="InterPro" id="IPR011263">
    <property type="entry name" value="DNA-dir_RNA_pol_RpoA/D/Rpb3"/>
</dbReference>
<dbReference type="InterPro" id="IPR011773">
    <property type="entry name" value="DNA-dir_RpoA"/>
</dbReference>
<dbReference type="InterPro" id="IPR036603">
    <property type="entry name" value="RBP11-like"/>
</dbReference>
<dbReference type="InterPro" id="IPR011260">
    <property type="entry name" value="RNAP_asu_C"/>
</dbReference>
<dbReference type="InterPro" id="IPR036643">
    <property type="entry name" value="RNApol_insert_sf"/>
</dbReference>
<dbReference type="NCBIfam" id="NF003513">
    <property type="entry name" value="PRK05182.1-2"/>
    <property type="match status" value="1"/>
</dbReference>
<dbReference type="NCBIfam" id="NF003519">
    <property type="entry name" value="PRK05182.2-5"/>
    <property type="match status" value="1"/>
</dbReference>
<dbReference type="NCBIfam" id="TIGR02027">
    <property type="entry name" value="rpoA"/>
    <property type="match status" value="1"/>
</dbReference>
<dbReference type="Pfam" id="PF01000">
    <property type="entry name" value="RNA_pol_A_bac"/>
    <property type="match status" value="1"/>
</dbReference>
<dbReference type="Pfam" id="PF03118">
    <property type="entry name" value="RNA_pol_A_CTD"/>
    <property type="match status" value="1"/>
</dbReference>
<dbReference type="Pfam" id="PF01193">
    <property type="entry name" value="RNA_pol_L"/>
    <property type="match status" value="1"/>
</dbReference>
<dbReference type="SMART" id="SM00662">
    <property type="entry name" value="RPOLD"/>
    <property type="match status" value="1"/>
</dbReference>
<dbReference type="SUPFAM" id="SSF47789">
    <property type="entry name" value="C-terminal domain of RNA polymerase alpha subunit"/>
    <property type="match status" value="1"/>
</dbReference>
<dbReference type="SUPFAM" id="SSF56553">
    <property type="entry name" value="Insert subdomain of RNA polymerase alpha subunit"/>
    <property type="match status" value="1"/>
</dbReference>
<dbReference type="SUPFAM" id="SSF55257">
    <property type="entry name" value="RBP11-like subunits of RNA polymerase"/>
    <property type="match status" value="1"/>
</dbReference>
<sequence>MSTQGFLKPRSIEVEPVGAHHAKIVMEPFERGYGHTLGNALRRILLSSMTGYAPTEVQMTGVVHEYSTIAGVREDVVDILLNLKGVVFKLHNRDEVTLVLRKNGAGAVVASDIELPHDVEIINPDHLICNLTDAGKIEMQVKVEKGRGYVPGNVRALSEDRTHTIGRIVLDASFSPVRRVSYAVESARVEQRTDLDKLVLDIETNGVISPEEAVRQAARILMDQISVFAALEGAGDAYEPPVRGTPQIDPVLLRPVDDLELTVRSANCLKAENIYYIGDLIQRTENELLKTPNLGRKSLNEIKEVLAARGLTLGMKLENWPPLGLERP</sequence>
<evidence type="ECO:0000255" key="1">
    <source>
        <dbReference type="HAMAP-Rule" id="MF_00059"/>
    </source>
</evidence>
<proteinExistence type="inferred from homology"/>